<comment type="function">
    <text evidence="1 5 6">Plays an important role in homologous strand exchange, a key step in DNA repair through homologous recombination (HR) (By similarity). Binds to single and double-stranded DNA and exhibits DNA-dependent ATPase activity. Underwinds duplex DNA (By similarity). Spindle genes are required for each of the symmetry-breaking steps that generate polarity during egg axis formation; oocyte positioning at the posterior of the cyst to generate the first AP polarity and inhibition of gurken (grk) signaling to the follicle cell layer to polarize first the AP axis and then DV axis. May have a role in female meiosis (PubMed:8625736, PubMed:9362456).</text>
</comment>
<comment type="subunit">
    <text evidence="4">Interacts with Rrp6; the interaction is required for the recruitment of spn-A to the DNA-damage response foci.</text>
</comment>
<comment type="subcellular location">
    <subcellularLocation>
        <location evidence="4">Nucleus</location>
    </subcellularLocation>
    <subcellularLocation>
        <location evidence="4">Cytoplasm</location>
    </subcellularLocation>
</comment>
<comment type="alternative products">
    <event type="alternative splicing"/>
    <isoform>
        <id>Q27297-1</id>
        <name>A</name>
        <sequence type="displayed"/>
    </isoform>
    <isoform>
        <id>Q27297-2</id>
        <name>B</name>
        <sequence type="described" ref="VSP_012414"/>
    </isoform>
</comment>
<comment type="tissue specificity">
    <text evidence="5">Highly expressed in ovaries.</text>
</comment>
<comment type="similarity">
    <text evidence="8">Belongs to the RecA family. RAD51 subfamily.</text>
</comment>
<accession>Q27297</accession>
<accession>Q8IGG8</accession>
<accession>Q8IMJ5</accession>
<accession>Q9VAA8</accession>
<protein>
    <recommendedName>
        <fullName>DNA repair protein Rad51 homolog</fullName>
    </recommendedName>
    <alternativeName>
        <fullName>Protein spindle-A</fullName>
    </alternativeName>
    <alternativeName>
        <fullName>RecA protein homolog</fullName>
    </alternativeName>
</protein>
<proteinExistence type="evidence at protein level"/>
<sequence length="336" mass="36647">MEKLTNVQAQQEEEEEEGPLSVTKLIGGSITAKDIKLLQQASLHTVESVANATKKQLMAIPGLGGGKVEQIITEANKLVPLGFLSARTFYQMRADVVQLSTGSKELDKLLGGGIETGSITEIFGEFRCGKTQLCHTLAVTCQLPISQKGGEGKCMYIDTENTFRPERLAAIAQRYKLNESEVLDNVAFTRAHNSDQQTKLIQMAAGMLFESRYALLIVDSAMALYRSDYIGRGELAARQNHLGLFLRMLQRLADEFGVAVVITNQVTASLDGAPGMFDAKKPIGGHIMAHSSTTRLYLRKGKGETRICKIYDSPCLPESEAMFAILPDGIGDARES</sequence>
<feature type="chain" id="PRO_0000122938" description="DNA repair protein Rad51 homolog">
    <location>
        <begin position="1"/>
        <end position="336"/>
    </location>
</feature>
<feature type="region of interest" description="Disordered" evidence="3">
    <location>
        <begin position="1"/>
        <end position="20"/>
    </location>
</feature>
<feature type="compositionally biased region" description="Polar residues" evidence="3">
    <location>
        <begin position="1"/>
        <end position="10"/>
    </location>
</feature>
<feature type="binding site" evidence="2">
    <location>
        <begin position="124"/>
        <end position="131"/>
    </location>
    <ligand>
        <name>ATP</name>
        <dbReference type="ChEBI" id="CHEBI:30616"/>
    </ligand>
</feature>
<feature type="splice variant" id="VSP_012414" description="In isoform B." evidence="7">
    <location>
        <begin position="1"/>
        <end position="57"/>
    </location>
</feature>
<feature type="sequence conflict" description="In Ref. 5; AAN71546." evidence="8" ref="5">
    <original>RES</original>
    <variation>GRANCAHL</variation>
    <location>
        <begin position="334"/>
        <end position="336"/>
    </location>
</feature>
<evidence type="ECO:0000250" key="1">
    <source>
        <dbReference type="UniProtKB" id="Q06609"/>
    </source>
</evidence>
<evidence type="ECO:0000255" key="2"/>
<evidence type="ECO:0000256" key="3">
    <source>
        <dbReference type="SAM" id="MobiDB-lite"/>
    </source>
</evidence>
<evidence type="ECO:0000269" key="4">
    <source>
    </source>
</evidence>
<evidence type="ECO:0000269" key="5">
    <source>
    </source>
</evidence>
<evidence type="ECO:0000269" key="6">
    <source>
    </source>
</evidence>
<evidence type="ECO:0000303" key="7">
    <source>
    </source>
</evidence>
<evidence type="ECO:0000305" key="8"/>
<reference key="1">
    <citation type="journal article" date="1994" name="Jpn. J. Genet.">
        <title>Cloning of the cDNA and genomic DNA that correspond to the recA-like gene of Drosophila melanogaster.</title>
        <authorList>
            <person name="Akaboshi E."/>
            <person name="Inoue Y."/>
            <person name="Ryo H."/>
        </authorList>
    </citation>
    <scope>NUCLEOTIDE SEQUENCE [GENOMIC DNA / MRNA] (ISOFORM A)</scope>
    <source>
        <strain>Canton-S</strain>
    </source>
</reference>
<reference key="2">
    <citation type="journal article" date="1996" name="Chromosoma">
        <title>A recA-like gene in Drosophila melanogaster that is expressed at high levels in female but not male meiotic tissues.</title>
        <authorList>
            <person name="McKee B.D."/>
            <person name="Ren X.J."/>
            <person name="Hong C.S."/>
        </authorList>
    </citation>
    <scope>NUCLEOTIDE SEQUENCE [GENOMIC DNA] (ISOFORM A)</scope>
    <scope>FUNCTION</scope>
    <scope>TISSUE SPECIFICITY</scope>
    <source>
        <strain>Oregon-R</strain>
    </source>
</reference>
<reference key="3">
    <citation type="journal article" date="2000" name="Science">
        <title>The genome sequence of Drosophila melanogaster.</title>
        <authorList>
            <person name="Adams M.D."/>
            <person name="Celniker S.E."/>
            <person name="Holt R.A."/>
            <person name="Evans C.A."/>
            <person name="Gocayne J.D."/>
            <person name="Amanatides P.G."/>
            <person name="Scherer S.E."/>
            <person name="Li P.W."/>
            <person name="Hoskins R.A."/>
            <person name="Galle R.F."/>
            <person name="George R.A."/>
            <person name="Lewis S.E."/>
            <person name="Richards S."/>
            <person name="Ashburner M."/>
            <person name="Henderson S.N."/>
            <person name="Sutton G.G."/>
            <person name="Wortman J.R."/>
            <person name="Yandell M.D."/>
            <person name="Zhang Q."/>
            <person name="Chen L.X."/>
            <person name="Brandon R.C."/>
            <person name="Rogers Y.-H.C."/>
            <person name="Blazej R.G."/>
            <person name="Champe M."/>
            <person name="Pfeiffer B.D."/>
            <person name="Wan K.H."/>
            <person name="Doyle C."/>
            <person name="Baxter E.G."/>
            <person name="Helt G."/>
            <person name="Nelson C.R."/>
            <person name="Miklos G.L.G."/>
            <person name="Abril J.F."/>
            <person name="Agbayani A."/>
            <person name="An H.-J."/>
            <person name="Andrews-Pfannkoch C."/>
            <person name="Baldwin D."/>
            <person name="Ballew R.M."/>
            <person name="Basu A."/>
            <person name="Baxendale J."/>
            <person name="Bayraktaroglu L."/>
            <person name="Beasley E.M."/>
            <person name="Beeson K.Y."/>
            <person name="Benos P.V."/>
            <person name="Berman B.P."/>
            <person name="Bhandari D."/>
            <person name="Bolshakov S."/>
            <person name="Borkova D."/>
            <person name="Botchan M.R."/>
            <person name="Bouck J."/>
            <person name="Brokstein P."/>
            <person name="Brottier P."/>
            <person name="Burtis K.C."/>
            <person name="Busam D.A."/>
            <person name="Butler H."/>
            <person name="Cadieu E."/>
            <person name="Center A."/>
            <person name="Chandra I."/>
            <person name="Cherry J.M."/>
            <person name="Cawley S."/>
            <person name="Dahlke C."/>
            <person name="Davenport L.B."/>
            <person name="Davies P."/>
            <person name="de Pablos B."/>
            <person name="Delcher A."/>
            <person name="Deng Z."/>
            <person name="Mays A.D."/>
            <person name="Dew I."/>
            <person name="Dietz S.M."/>
            <person name="Dodson K."/>
            <person name="Doup L.E."/>
            <person name="Downes M."/>
            <person name="Dugan-Rocha S."/>
            <person name="Dunkov B.C."/>
            <person name="Dunn P."/>
            <person name="Durbin K.J."/>
            <person name="Evangelista C.C."/>
            <person name="Ferraz C."/>
            <person name="Ferriera S."/>
            <person name="Fleischmann W."/>
            <person name="Fosler C."/>
            <person name="Gabrielian A.E."/>
            <person name="Garg N.S."/>
            <person name="Gelbart W.M."/>
            <person name="Glasser K."/>
            <person name="Glodek A."/>
            <person name="Gong F."/>
            <person name="Gorrell J.H."/>
            <person name="Gu Z."/>
            <person name="Guan P."/>
            <person name="Harris M."/>
            <person name="Harris N.L."/>
            <person name="Harvey D.A."/>
            <person name="Heiman T.J."/>
            <person name="Hernandez J.R."/>
            <person name="Houck J."/>
            <person name="Hostin D."/>
            <person name="Houston K.A."/>
            <person name="Howland T.J."/>
            <person name="Wei M.-H."/>
            <person name="Ibegwam C."/>
            <person name="Jalali M."/>
            <person name="Kalush F."/>
            <person name="Karpen G.H."/>
            <person name="Ke Z."/>
            <person name="Kennison J.A."/>
            <person name="Ketchum K.A."/>
            <person name="Kimmel B.E."/>
            <person name="Kodira C.D."/>
            <person name="Kraft C.L."/>
            <person name="Kravitz S."/>
            <person name="Kulp D."/>
            <person name="Lai Z."/>
            <person name="Lasko P."/>
            <person name="Lei Y."/>
            <person name="Levitsky A.A."/>
            <person name="Li J.H."/>
            <person name="Li Z."/>
            <person name="Liang Y."/>
            <person name="Lin X."/>
            <person name="Liu X."/>
            <person name="Mattei B."/>
            <person name="McIntosh T.C."/>
            <person name="McLeod M.P."/>
            <person name="McPherson D."/>
            <person name="Merkulov G."/>
            <person name="Milshina N.V."/>
            <person name="Mobarry C."/>
            <person name="Morris J."/>
            <person name="Moshrefi A."/>
            <person name="Mount S.M."/>
            <person name="Moy M."/>
            <person name="Murphy B."/>
            <person name="Murphy L."/>
            <person name="Muzny D.M."/>
            <person name="Nelson D.L."/>
            <person name="Nelson D.R."/>
            <person name="Nelson K.A."/>
            <person name="Nixon K."/>
            <person name="Nusskern D.R."/>
            <person name="Pacleb J.M."/>
            <person name="Palazzolo M."/>
            <person name="Pittman G.S."/>
            <person name="Pan S."/>
            <person name="Pollard J."/>
            <person name="Puri V."/>
            <person name="Reese M.G."/>
            <person name="Reinert K."/>
            <person name="Remington K."/>
            <person name="Saunders R.D.C."/>
            <person name="Scheeler F."/>
            <person name="Shen H."/>
            <person name="Shue B.C."/>
            <person name="Siden-Kiamos I."/>
            <person name="Simpson M."/>
            <person name="Skupski M.P."/>
            <person name="Smith T.J."/>
            <person name="Spier E."/>
            <person name="Spradling A.C."/>
            <person name="Stapleton M."/>
            <person name="Strong R."/>
            <person name="Sun E."/>
            <person name="Svirskas R."/>
            <person name="Tector C."/>
            <person name="Turner R."/>
            <person name="Venter E."/>
            <person name="Wang A.H."/>
            <person name="Wang X."/>
            <person name="Wang Z.-Y."/>
            <person name="Wassarman D.A."/>
            <person name="Weinstock G.M."/>
            <person name="Weissenbach J."/>
            <person name="Williams S.M."/>
            <person name="Woodage T."/>
            <person name="Worley K.C."/>
            <person name="Wu D."/>
            <person name="Yang S."/>
            <person name="Yao Q.A."/>
            <person name="Ye J."/>
            <person name="Yeh R.-F."/>
            <person name="Zaveri J.S."/>
            <person name="Zhan M."/>
            <person name="Zhang G."/>
            <person name="Zhao Q."/>
            <person name="Zheng L."/>
            <person name="Zheng X.H."/>
            <person name="Zhong F.N."/>
            <person name="Zhong W."/>
            <person name="Zhou X."/>
            <person name="Zhu S.C."/>
            <person name="Zhu X."/>
            <person name="Smith H.O."/>
            <person name="Gibbs R.A."/>
            <person name="Myers E.W."/>
            <person name="Rubin G.M."/>
            <person name="Venter J.C."/>
        </authorList>
    </citation>
    <scope>NUCLEOTIDE SEQUENCE [LARGE SCALE GENOMIC DNA]</scope>
    <source>
        <strain>Berkeley</strain>
    </source>
</reference>
<reference key="4">
    <citation type="journal article" date="2002" name="Genome Biol.">
        <title>Annotation of the Drosophila melanogaster euchromatic genome: a systematic review.</title>
        <authorList>
            <person name="Misra S."/>
            <person name="Crosby M.A."/>
            <person name="Mungall C.J."/>
            <person name="Matthews B.B."/>
            <person name="Campbell K.S."/>
            <person name="Hradecky P."/>
            <person name="Huang Y."/>
            <person name="Kaminker J.S."/>
            <person name="Millburn G.H."/>
            <person name="Prochnik S.E."/>
            <person name="Smith C.D."/>
            <person name="Tupy J.L."/>
            <person name="Whitfield E.J."/>
            <person name="Bayraktaroglu L."/>
            <person name="Berman B.P."/>
            <person name="Bettencourt B.R."/>
            <person name="Celniker S.E."/>
            <person name="de Grey A.D.N.J."/>
            <person name="Drysdale R.A."/>
            <person name="Harris N.L."/>
            <person name="Richter J."/>
            <person name="Russo S."/>
            <person name="Schroeder A.J."/>
            <person name="Shu S.Q."/>
            <person name="Stapleton M."/>
            <person name="Yamada C."/>
            <person name="Ashburner M."/>
            <person name="Gelbart W.M."/>
            <person name="Rubin G.M."/>
            <person name="Lewis S.E."/>
        </authorList>
    </citation>
    <scope>GENOME REANNOTATION</scope>
    <scope>ALTERNATIVE SPLICING</scope>
    <source>
        <strain>Berkeley</strain>
    </source>
</reference>
<reference key="5">
    <citation type="journal article" date="2002" name="Genome Biol.">
        <title>A Drosophila full-length cDNA resource.</title>
        <authorList>
            <person name="Stapleton M."/>
            <person name="Carlson J.W."/>
            <person name="Brokstein P."/>
            <person name="Yu C."/>
            <person name="Champe M."/>
            <person name="George R.A."/>
            <person name="Guarin H."/>
            <person name="Kronmiller B."/>
            <person name="Pacleb J.M."/>
            <person name="Park S."/>
            <person name="Wan K.H."/>
            <person name="Rubin G.M."/>
            <person name="Celniker S.E."/>
        </authorList>
    </citation>
    <scope>NUCLEOTIDE SEQUENCE [LARGE SCALE MRNA] (ISOFORM B)</scope>
    <source>
        <strain>Berkeley</strain>
        <tissue>Head</tissue>
    </source>
</reference>
<reference key="6">
    <citation type="journal article" date="1997" name="Development">
        <title>Oocyte determination and the origin of polarity in Drosophila: the role of the spindle genes.</title>
        <authorList>
            <person name="Gonzalez-Reyes A."/>
            <person name="Elliott H."/>
            <person name="St Johnston D."/>
        </authorList>
    </citation>
    <scope>FUNCTION</scope>
</reference>
<reference evidence="8" key="7">
    <citation type="journal article" date="2015" name="J. Cell Sci.">
        <title>RRP6/EXOSC10 is required for the repair of DNA double-strand breaks by homologous recombination.</title>
        <authorList>
            <person name="Marin-Vicente C."/>
            <person name="Domingo-Prim J."/>
            <person name="Eberle A.B."/>
            <person name="Visa N."/>
        </authorList>
    </citation>
    <scope>INTERACTION WITH RRP6</scope>
    <scope>SUBCELLULAR LOCATION</scope>
</reference>
<gene>
    <name type="primary">spn-A</name>
    <name type="synonym">DMR</name>
    <name type="synonym">Rad51</name>
    <name type="ORF">CG7948</name>
</gene>
<organism>
    <name type="scientific">Drosophila melanogaster</name>
    <name type="common">Fruit fly</name>
    <dbReference type="NCBI Taxonomy" id="7227"/>
    <lineage>
        <taxon>Eukaryota</taxon>
        <taxon>Metazoa</taxon>
        <taxon>Ecdysozoa</taxon>
        <taxon>Arthropoda</taxon>
        <taxon>Hexapoda</taxon>
        <taxon>Insecta</taxon>
        <taxon>Pterygota</taxon>
        <taxon>Neoptera</taxon>
        <taxon>Endopterygota</taxon>
        <taxon>Diptera</taxon>
        <taxon>Brachycera</taxon>
        <taxon>Muscomorpha</taxon>
        <taxon>Ephydroidea</taxon>
        <taxon>Drosophilidae</taxon>
        <taxon>Drosophila</taxon>
        <taxon>Sophophora</taxon>
    </lineage>
</organism>
<name>RAD51_DROME</name>
<keyword id="KW-0025">Alternative splicing</keyword>
<keyword id="KW-0067">ATP-binding</keyword>
<keyword id="KW-0963">Cytoplasm</keyword>
<keyword id="KW-0217">Developmental protein</keyword>
<keyword id="KW-0227">DNA damage</keyword>
<keyword id="KW-0234">DNA repair</keyword>
<keyword id="KW-0238">DNA-binding</keyword>
<keyword id="KW-0469">Meiosis</keyword>
<keyword id="KW-0547">Nucleotide-binding</keyword>
<keyword id="KW-0539">Nucleus</keyword>
<keyword id="KW-1185">Reference proteome</keyword>
<dbReference type="EMBL" id="D37788">
    <property type="protein sequence ID" value="BAA07039.1"/>
    <property type="molecule type" value="Genomic_DNA"/>
</dbReference>
<dbReference type="EMBL" id="D17726">
    <property type="protein sequence ID" value="BAA04580.1"/>
    <property type="molecule type" value="mRNA"/>
</dbReference>
<dbReference type="EMBL" id="L41342">
    <property type="protein sequence ID" value="AAA64873.1"/>
    <property type="molecule type" value="Genomic_DNA"/>
</dbReference>
<dbReference type="EMBL" id="AE014297">
    <property type="protein sequence ID" value="AAF57005.1"/>
    <property type="molecule type" value="Genomic_DNA"/>
</dbReference>
<dbReference type="EMBL" id="AE014297">
    <property type="protein sequence ID" value="AAN14213.1"/>
    <property type="molecule type" value="Genomic_DNA"/>
</dbReference>
<dbReference type="EMBL" id="BT001791">
    <property type="protein sequence ID" value="AAN71546.1"/>
    <property type="molecule type" value="mRNA"/>
</dbReference>
<dbReference type="RefSeq" id="NP_524583.1">
    <molecule id="Q27297-1"/>
    <property type="nucleotide sequence ID" value="NM_079844.4"/>
</dbReference>
<dbReference type="RefSeq" id="NP_733342.1">
    <molecule id="Q27297-2"/>
    <property type="nucleotide sequence ID" value="NM_170463.3"/>
</dbReference>
<dbReference type="SMR" id="Q27297"/>
<dbReference type="BioGRID" id="68433">
    <property type="interactions" value="82"/>
</dbReference>
<dbReference type="DIP" id="DIP-20846N"/>
<dbReference type="FunCoup" id="Q27297">
    <property type="interactions" value="1106"/>
</dbReference>
<dbReference type="IntAct" id="Q27297">
    <property type="interactions" value="38"/>
</dbReference>
<dbReference type="STRING" id="7227.FBpp0084955"/>
<dbReference type="PaxDb" id="7227-FBpp0084955"/>
<dbReference type="EnsemblMetazoa" id="FBtr0085589">
    <molecule id="Q27297-1"/>
    <property type="protein sequence ID" value="FBpp0084955"/>
    <property type="gene ID" value="FBgn0003479"/>
</dbReference>
<dbReference type="EnsemblMetazoa" id="FBtr0085590">
    <molecule id="Q27297-2"/>
    <property type="protein sequence ID" value="FBpp0084956"/>
    <property type="gene ID" value="FBgn0003479"/>
</dbReference>
<dbReference type="GeneID" id="43577"/>
<dbReference type="KEGG" id="dme:Dmel_CG7948"/>
<dbReference type="AGR" id="FB:FBgn0003479"/>
<dbReference type="CTD" id="43577"/>
<dbReference type="FlyBase" id="FBgn0003479">
    <property type="gene designation" value="spn-A"/>
</dbReference>
<dbReference type="VEuPathDB" id="VectorBase:FBgn0003479"/>
<dbReference type="eggNOG" id="KOG1433">
    <property type="taxonomic scope" value="Eukaryota"/>
</dbReference>
<dbReference type="GeneTree" id="ENSGT00940000156157"/>
<dbReference type="InParanoid" id="Q27297"/>
<dbReference type="OMA" id="RAYNSNH"/>
<dbReference type="OrthoDB" id="10251254at2759"/>
<dbReference type="PhylomeDB" id="Q27297"/>
<dbReference type="Reactome" id="R-DME-5693616">
    <property type="pathway name" value="Presynaptic phase of homologous DNA pairing and strand exchange"/>
</dbReference>
<dbReference type="SignaLink" id="Q27297"/>
<dbReference type="BioGRID-ORCS" id="43577">
    <property type="hits" value="0 hits in 3 CRISPR screens"/>
</dbReference>
<dbReference type="GenomeRNAi" id="43577"/>
<dbReference type="PRO" id="PR:Q27297"/>
<dbReference type="Proteomes" id="UP000000803">
    <property type="component" value="Chromosome 3R"/>
</dbReference>
<dbReference type="Bgee" id="FBgn0003479">
    <property type="expression patterns" value="Expressed in adult enteroendocrine precursor cell in adult midgut (Drosophila) and 50 other cell types or tissues"/>
</dbReference>
<dbReference type="ExpressionAtlas" id="Q27297">
    <property type="expression patterns" value="baseline and differential"/>
</dbReference>
<dbReference type="GO" id="GO:0000794">
    <property type="term" value="C:condensed nuclear chromosome"/>
    <property type="evidence" value="ECO:0000318"/>
    <property type="project" value="GO_Central"/>
</dbReference>
<dbReference type="GO" id="GO:0005737">
    <property type="term" value="C:cytoplasm"/>
    <property type="evidence" value="ECO:0007669"/>
    <property type="project" value="UniProtKB-SubCell"/>
</dbReference>
<dbReference type="GO" id="GO:0005524">
    <property type="term" value="F:ATP binding"/>
    <property type="evidence" value="ECO:0007669"/>
    <property type="project" value="UniProtKB-KW"/>
</dbReference>
<dbReference type="GO" id="GO:0016887">
    <property type="term" value="F:ATP hydrolysis activity"/>
    <property type="evidence" value="ECO:0007669"/>
    <property type="project" value="InterPro"/>
</dbReference>
<dbReference type="GO" id="GO:0008094">
    <property type="term" value="F:ATP-dependent activity, acting on DNA"/>
    <property type="evidence" value="ECO:0000318"/>
    <property type="project" value="GO_Central"/>
</dbReference>
<dbReference type="GO" id="GO:0140664">
    <property type="term" value="F:ATP-dependent DNA damage sensor activity"/>
    <property type="evidence" value="ECO:0007669"/>
    <property type="project" value="InterPro"/>
</dbReference>
<dbReference type="GO" id="GO:0000150">
    <property type="term" value="F:DNA strand exchange activity"/>
    <property type="evidence" value="ECO:0000250"/>
    <property type="project" value="FlyBase"/>
</dbReference>
<dbReference type="GO" id="GO:0003690">
    <property type="term" value="F:double-stranded DNA binding"/>
    <property type="evidence" value="ECO:0000318"/>
    <property type="project" value="GO_Central"/>
</dbReference>
<dbReference type="GO" id="GO:0003697">
    <property type="term" value="F:single-stranded DNA binding"/>
    <property type="evidence" value="ECO:0000318"/>
    <property type="project" value="GO_Central"/>
</dbReference>
<dbReference type="GO" id="GO:0070192">
    <property type="term" value="P:chromosome organization involved in meiotic cell cycle"/>
    <property type="evidence" value="ECO:0000318"/>
    <property type="project" value="GO_Central"/>
</dbReference>
<dbReference type="GO" id="GO:0000730">
    <property type="term" value="P:DNA recombinase assembly"/>
    <property type="evidence" value="ECO:0000318"/>
    <property type="project" value="GO_Central"/>
</dbReference>
<dbReference type="GO" id="GO:0006310">
    <property type="term" value="P:DNA recombination"/>
    <property type="evidence" value="ECO:0000250"/>
    <property type="project" value="FlyBase"/>
</dbReference>
<dbReference type="GO" id="GO:0006281">
    <property type="term" value="P:DNA repair"/>
    <property type="evidence" value="ECO:0000316"/>
    <property type="project" value="FlyBase"/>
</dbReference>
<dbReference type="GO" id="GO:0042148">
    <property type="term" value="P:DNA strand invasion"/>
    <property type="evidence" value="ECO:0000318"/>
    <property type="project" value="GO_Central"/>
</dbReference>
<dbReference type="GO" id="GO:0006302">
    <property type="term" value="P:double-strand break repair"/>
    <property type="evidence" value="ECO:0000315"/>
    <property type="project" value="FlyBase"/>
</dbReference>
<dbReference type="GO" id="GO:0045003">
    <property type="term" value="P:double-strand break repair via synthesis-dependent strand annealing"/>
    <property type="evidence" value="ECO:0000315"/>
    <property type="project" value="FlyBase"/>
</dbReference>
<dbReference type="GO" id="GO:0007143">
    <property type="term" value="P:female meiotic nuclear division"/>
    <property type="evidence" value="ECO:0000315"/>
    <property type="project" value="FlyBase"/>
</dbReference>
<dbReference type="GO" id="GO:0007294">
    <property type="term" value="P:germarium-derived oocyte fate determination"/>
    <property type="evidence" value="ECO:0000316"/>
    <property type="project" value="FlyBase"/>
</dbReference>
<dbReference type="GO" id="GO:0008298">
    <property type="term" value="P:intracellular mRNA localization"/>
    <property type="evidence" value="ECO:0000315"/>
    <property type="project" value="FlyBase"/>
</dbReference>
<dbReference type="GO" id="GO:0006312">
    <property type="term" value="P:mitotic recombination"/>
    <property type="evidence" value="ECO:0000318"/>
    <property type="project" value="GO_Central"/>
</dbReference>
<dbReference type="GO" id="GO:1990426">
    <property type="term" value="P:mitotic recombination-dependent replication fork processing"/>
    <property type="evidence" value="ECO:0007669"/>
    <property type="project" value="InterPro"/>
</dbReference>
<dbReference type="GO" id="GO:0030716">
    <property type="term" value="P:oocyte fate determination"/>
    <property type="evidence" value="ECO:0000315"/>
    <property type="project" value="FlyBase"/>
</dbReference>
<dbReference type="GO" id="GO:0030717">
    <property type="term" value="P:oocyte karyosome formation"/>
    <property type="evidence" value="ECO:0000315"/>
    <property type="project" value="FlyBase"/>
</dbReference>
<dbReference type="GO" id="GO:0048477">
    <property type="term" value="P:oogenesis"/>
    <property type="evidence" value="ECO:0000315"/>
    <property type="project" value="FlyBase"/>
</dbReference>
<dbReference type="GO" id="GO:0009949">
    <property type="term" value="P:polarity specification of anterior/posterior axis"/>
    <property type="evidence" value="ECO:0000315"/>
    <property type="project" value="FlyBase"/>
</dbReference>
<dbReference type="GO" id="GO:0009951">
    <property type="term" value="P:polarity specification of dorsal/ventral axis"/>
    <property type="evidence" value="ECO:0000315"/>
    <property type="project" value="FlyBase"/>
</dbReference>
<dbReference type="GO" id="GO:0007131">
    <property type="term" value="P:reciprocal meiotic recombination"/>
    <property type="evidence" value="ECO:0000318"/>
    <property type="project" value="GO_Central"/>
</dbReference>
<dbReference type="GO" id="GO:0010569">
    <property type="term" value="P:regulation of double-strand break repair via homologous recombination"/>
    <property type="evidence" value="ECO:0000315"/>
    <property type="project" value="FlyBase"/>
</dbReference>
<dbReference type="CDD" id="cd19513">
    <property type="entry name" value="Rad51"/>
    <property type="match status" value="1"/>
</dbReference>
<dbReference type="FunFam" id="1.10.150.20:FF:000133">
    <property type="entry name" value="DNA repair protein RAD51 homolog"/>
    <property type="match status" value="1"/>
</dbReference>
<dbReference type="FunFam" id="3.40.50.300:FF:000092">
    <property type="entry name" value="DNA repair protein Rad51 homolog"/>
    <property type="match status" value="1"/>
</dbReference>
<dbReference type="Gene3D" id="1.10.150.20">
    <property type="entry name" value="5' to 3' exonuclease, C-terminal subdomain"/>
    <property type="match status" value="1"/>
</dbReference>
<dbReference type="Gene3D" id="3.40.50.300">
    <property type="entry name" value="P-loop containing nucleotide triphosphate hydrolases"/>
    <property type="match status" value="1"/>
</dbReference>
<dbReference type="InterPro" id="IPR003593">
    <property type="entry name" value="AAA+_ATPase"/>
</dbReference>
<dbReference type="InterPro" id="IPR011941">
    <property type="entry name" value="DNA_recomb/repair_Rad51"/>
</dbReference>
<dbReference type="InterPro" id="IPR013632">
    <property type="entry name" value="DNA_recomb/repair_Rad51_C"/>
</dbReference>
<dbReference type="InterPro" id="IPR016467">
    <property type="entry name" value="DNA_recomb/repair_RecA-like"/>
</dbReference>
<dbReference type="InterPro" id="IPR010995">
    <property type="entry name" value="DNA_repair_Rad51/TF_NusA_a-hlx"/>
</dbReference>
<dbReference type="InterPro" id="IPR027417">
    <property type="entry name" value="P-loop_NTPase"/>
</dbReference>
<dbReference type="InterPro" id="IPR020588">
    <property type="entry name" value="RecA_ATP-bd"/>
</dbReference>
<dbReference type="InterPro" id="IPR020587">
    <property type="entry name" value="RecA_monomer-monomer_interface"/>
</dbReference>
<dbReference type="NCBIfam" id="NF003301">
    <property type="entry name" value="PRK04301.1"/>
    <property type="match status" value="1"/>
</dbReference>
<dbReference type="NCBIfam" id="TIGR02239">
    <property type="entry name" value="recomb_RAD51"/>
    <property type="match status" value="1"/>
</dbReference>
<dbReference type="PANTHER" id="PTHR22942:SF39">
    <property type="entry name" value="DNA REPAIR PROTEIN RAD51 HOMOLOG 1"/>
    <property type="match status" value="1"/>
</dbReference>
<dbReference type="PANTHER" id="PTHR22942">
    <property type="entry name" value="RECA/RAD51/RADA DNA STRAND-PAIRING FAMILY MEMBER"/>
    <property type="match status" value="1"/>
</dbReference>
<dbReference type="Pfam" id="PF14520">
    <property type="entry name" value="HHH_5"/>
    <property type="match status" value="1"/>
</dbReference>
<dbReference type="Pfam" id="PF08423">
    <property type="entry name" value="Rad51"/>
    <property type="match status" value="1"/>
</dbReference>
<dbReference type="PIRSF" id="PIRSF005856">
    <property type="entry name" value="Rad51"/>
    <property type="match status" value="1"/>
</dbReference>
<dbReference type="SMART" id="SM00382">
    <property type="entry name" value="AAA"/>
    <property type="match status" value="1"/>
</dbReference>
<dbReference type="SUPFAM" id="SSF52540">
    <property type="entry name" value="P-loop containing nucleoside triphosphate hydrolases"/>
    <property type="match status" value="1"/>
</dbReference>
<dbReference type="SUPFAM" id="SSF47794">
    <property type="entry name" value="Rad51 N-terminal domain-like"/>
    <property type="match status" value="1"/>
</dbReference>
<dbReference type="PROSITE" id="PS50162">
    <property type="entry name" value="RECA_2"/>
    <property type="match status" value="1"/>
</dbReference>
<dbReference type="PROSITE" id="PS50163">
    <property type="entry name" value="RECA_3"/>
    <property type="match status" value="1"/>
</dbReference>